<protein>
    <recommendedName>
        <fullName evidence="1">Peptidyl-tRNA hydrolase</fullName>
        <shortName evidence="1">Pth</shortName>
        <ecNumber evidence="1">3.1.1.29</ecNumber>
    </recommendedName>
</protein>
<evidence type="ECO:0000255" key="1">
    <source>
        <dbReference type="HAMAP-Rule" id="MF_00083"/>
    </source>
</evidence>
<comment type="function">
    <text evidence="1">Hydrolyzes ribosome-free peptidyl-tRNAs (with 1 or more amino acids incorporated), which drop off the ribosome during protein synthesis, or as a result of ribosome stalling.</text>
</comment>
<comment type="function">
    <text evidence="1">Catalyzes the release of premature peptidyl moieties from peptidyl-tRNA molecules trapped in stalled 50S ribosomal subunits, and thus maintains levels of free tRNAs and 50S ribosomes.</text>
</comment>
<comment type="catalytic activity">
    <reaction evidence="1">
        <text>an N-acyl-L-alpha-aminoacyl-tRNA + H2O = an N-acyl-L-amino acid + a tRNA + H(+)</text>
        <dbReference type="Rhea" id="RHEA:54448"/>
        <dbReference type="Rhea" id="RHEA-COMP:10123"/>
        <dbReference type="Rhea" id="RHEA-COMP:13883"/>
        <dbReference type="ChEBI" id="CHEBI:15377"/>
        <dbReference type="ChEBI" id="CHEBI:15378"/>
        <dbReference type="ChEBI" id="CHEBI:59874"/>
        <dbReference type="ChEBI" id="CHEBI:78442"/>
        <dbReference type="ChEBI" id="CHEBI:138191"/>
        <dbReference type="EC" id="3.1.1.29"/>
    </reaction>
</comment>
<comment type="subunit">
    <text evidence="1">Monomer.</text>
</comment>
<comment type="subcellular location">
    <subcellularLocation>
        <location evidence="1">Cytoplasm</location>
    </subcellularLocation>
</comment>
<comment type="similarity">
    <text evidence="1">Belongs to the PTH family.</text>
</comment>
<gene>
    <name evidence="1" type="primary">pth</name>
    <name type="ordered locus">Csal_1522</name>
</gene>
<accession>Q1QXD3</accession>
<sequence>MSDVKAIIGLGNPGTEYDATRHNAGAWVVEALARDSLTPLRAERKFLGQYAKVRYAGHDVHLLVPSTYMNRSGKAVAALCQFFKLTPDELLIAHDELDIAPGTARYKHGGGHGGHNGLRDTVSALGNDKSFHRLRIGIGHPGSAKQVVNYVLGRPGKAERAAIDAAIDECLRTLPDVLDGNWAGAMNRLHSFNA</sequence>
<name>PTH_CHRSD</name>
<dbReference type="EC" id="3.1.1.29" evidence="1"/>
<dbReference type="EMBL" id="CP000285">
    <property type="protein sequence ID" value="ABE58875.1"/>
    <property type="molecule type" value="Genomic_DNA"/>
</dbReference>
<dbReference type="RefSeq" id="WP_011506821.1">
    <property type="nucleotide sequence ID" value="NC_007963.1"/>
</dbReference>
<dbReference type="SMR" id="Q1QXD3"/>
<dbReference type="STRING" id="290398.Csal_1522"/>
<dbReference type="GeneID" id="95334252"/>
<dbReference type="KEGG" id="csa:Csal_1522"/>
<dbReference type="eggNOG" id="COG0193">
    <property type="taxonomic scope" value="Bacteria"/>
</dbReference>
<dbReference type="HOGENOM" id="CLU_062456_3_1_6"/>
<dbReference type="OrthoDB" id="9800507at2"/>
<dbReference type="Proteomes" id="UP000000239">
    <property type="component" value="Chromosome"/>
</dbReference>
<dbReference type="GO" id="GO:0005737">
    <property type="term" value="C:cytoplasm"/>
    <property type="evidence" value="ECO:0007669"/>
    <property type="project" value="UniProtKB-SubCell"/>
</dbReference>
<dbReference type="GO" id="GO:0004045">
    <property type="term" value="F:peptidyl-tRNA hydrolase activity"/>
    <property type="evidence" value="ECO:0007669"/>
    <property type="project" value="UniProtKB-UniRule"/>
</dbReference>
<dbReference type="GO" id="GO:0000049">
    <property type="term" value="F:tRNA binding"/>
    <property type="evidence" value="ECO:0007669"/>
    <property type="project" value="UniProtKB-UniRule"/>
</dbReference>
<dbReference type="GO" id="GO:0006515">
    <property type="term" value="P:protein quality control for misfolded or incompletely synthesized proteins"/>
    <property type="evidence" value="ECO:0007669"/>
    <property type="project" value="UniProtKB-UniRule"/>
</dbReference>
<dbReference type="GO" id="GO:0072344">
    <property type="term" value="P:rescue of stalled ribosome"/>
    <property type="evidence" value="ECO:0007669"/>
    <property type="project" value="UniProtKB-UniRule"/>
</dbReference>
<dbReference type="CDD" id="cd00462">
    <property type="entry name" value="PTH"/>
    <property type="match status" value="1"/>
</dbReference>
<dbReference type="FunFam" id="3.40.50.1470:FF:000001">
    <property type="entry name" value="Peptidyl-tRNA hydrolase"/>
    <property type="match status" value="1"/>
</dbReference>
<dbReference type="Gene3D" id="3.40.50.1470">
    <property type="entry name" value="Peptidyl-tRNA hydrolase"/>
    <property type="match status" value="1"/>
</dbReference>
<dbReference type="HAMAP" id="MF_00083">
    <property type="entry name" value="Pept_tRNA_hydro_bact"/>
    <property type="match status" value="1"/>
</dbReference>
<dbReference type="InterPro" id="IPR001328">
    <property type="entry name" value="Pept_tRNA_hydro"/>
</dbReference>
<dbReference type="InterPro" id="IPR018171">
    <property type="entry name" value="Pept_tRNA_hydro_CS"/>
</dbReference>
<dbReference type="InterPro" id="IPR036416">
    <property type="entry name" value="Pept_tRNA_hydro_sf"/>
</dbReference>
<dbReference type="NCBIfam" id="TIGR00447">
    <property type="entry name" value="pth"/>
    <property type="match status" value="1"/>
</dbReference>
<dbReference type="PANTHER" id="PTHR17224">
    <property type="entry name" value="PEPTIDYL-TRNA HYDROLASE"/>
    <property type="match status" value="1"/>
</dbReference>
<dbReference type="PANTHER" id="PTHR17224:SF1">
    <property type="entry name" value="PEPTIDYL-TRNA HYDROLASE"/>
    <property type="match status" value="1"/>
</dbReference>
<dbReference type="Pfam" id="PF01195">
    <property type="entry name" value="Pept_tRNA_hydro"/>
    <property type="match status" value="1"/>
</dbReference>
<dbReference type="SUPFAM" id="SSF53178">
    <property type="entry name" value="Peptidyl-tRNA hydrolase-like"/>
    <property type="match status" value="1"/>
</dbReference>
<dbReference type="PROSITE" id="PS01195">
    <property type="entry name" value="PEPT_TRNA_HYDROL_1"/>
    <property type="match status" value="1"/>
</dbReference>
<dbReference type="PROSITE" id="PS01196">
    <property type="entry name" value="PEPT_TRNA_HYDROL_2"/>
    <property type="match status" value="1"/>
</dbReference>
<keyword id="KW-0963">Cytoplasm</keyword>
<keyword id="KW-0378">Hydrolase</keyword>
<keyword id="KW-1185">Reference proteome</keyword>
<keyword id="KW-0694">RNA-binding</keyword>
<keyword id="KW-0820">tRNA-binding</keyword>
<organism>
    <name type="scientific">Chromohalobacter salexigens (strain ATCC BAA-138 / DSM 3043 / CIP 106854 / NCIMB 13768 / 1H11)</name>
    <dbReference type="NCBI Taxonomy" id="290398"/>
    <lineage>
        <taxon>Bacteria</taxon>
        <taxon>Pseudomonadati</taxon>
        <taxon>Pseudomonadota</taxon>
        <taxon>Gammaproteobacteria</taxon>
        <taxon>Oceanospirillales</taxon>
        <taxon>Halomonadaceae</taxon>
        <taxon>Chromohalobacter</taxon>
    </lineage>
</organism>
<proteinExistence type="inferred from homology"/>
<feature type="chain" id="PRO_0000264020" description="Peptidyl-tRNA hydrolase">
    <location>
        <begin position="1"/>
        <end position="194"/>
    </location>
</feature>
<feature type="active site" description="Proton acceptor" evidence="1">
    <location>
        <position position="22"/>
    </location>
</feature>
<feature type="binding site" evidence="1">
    <location>
        <position position="17"/>
    </location>
    <ligand>
        <name>tRNA</name>
        <dbReference type="ChEBI" id="CHEBI:17843"/>
    </ligand>
</feature>
<feature type="binding site" evidence="1">
    <location>
        <position position="68"/>
    </location>
    <ligand>
        <name>tRNA</name>
        <dbReference type="ChEBI" id="CHEBI:17843"/>
    </ligand>
</feature>
<feature type="binding site" evidence="1">
    <location>
        <position position="70"/>
    </location>
    <ligand>
        <name>tRNA</name>
        <dbReference type="ChEBI" id="CHEBI:17843"/>
    </ligand>
</feature>
<feature type="binding site" evidence="1">
    <location>
        <position position="116"/>
    </location>
    <ligand>
        <name>tRNA</name>
        <dbReference type="ChEBI" id="CHEBI:17843"/>
    </ligand>
</feature>
<feature type="site" description="Discriminates between blocked and unblocked aminoacyl-tRNA" evidence="1">
    <location>
        <position position="12"/>
    </location>
</feature>
<feature type="site" description="Stabilizes the basic form of H active site to accept a proton" evidence="1">
    <location>
        <position position="95"/>
    </location>
</feature>
<reference key="1">
    <citation type="journal article" date="2011" name="Stand. Genomic Sci.">
        <title>Complete genome sequence of the halophilic and highly halotolerant Chromohalobacter salexigens type strain (1H11(T)).</title>
        <authorList>
            <person name="Copeland A."/>
            <person name="O'Connor K."/>
            <person name="Lucas S."/>
            <person name="Lapidus A."/>
            <person name="Berry K.W."/>
            <person name="Detter J.C."/>
            <person name="Del Rio T.G."/>
            <person name="Hammon N."/>
            <person name="Dalin E."/>
            <person name="Tice H."/>
            <person name="Pitluck S."/>
            <person name="Bruce D."/>
            <person name="Goodwin L."/>
            <person name="Han C."/>
            <person name="Tapia R."/>
            <person name="Saunders E."/>
            <person name="Schmutz J."/>
            <person name="Brettin T."/>
            <person name="Larimer F."/>
            <person name="Land M."/>
            <person name="Hauser L."/>
            <person name="Vargas C."/>
            <person name="Nieto J.J."/>
            <person name="Kyrpides N.C."/>
            <person name="Ivanova N."/>
            <person name="Goker M."/>
            <person name="Klenk H.P."/>
            <person name="Csonka L.N."/>
            <person name="Woyke T."/>
        </authorList>
    </citation>
    <scope>NUCLEOTIDE SEQUENCE [LARGE SCALE GENOMIC DNA]</scope>
    <source>
        <strain>ATCC BAA-138 / DSM 3043 / CIP 106854 / NCIMB 13768 / 1H11</strain>
    </source>
</reference>